<keyword id="KW-0479">Metal-binding</keyword>
<keyword id="KW-0665">Pyrimidine biosynthesis</keyword>
<keyword id="KW-0862">Zinc</keyword>
<gene>
    <name evidence="1" type="primary">pyrI</name>
    <name type="ordered locus">YN1551_1313</name>
</gene>
<dbReference type="EMBL" id="CP001404">
    <property type="protein sequence ID" value="ACP48408.1"/>
    <property type="molecule type" value="Genomic_DNA"/>
</dbReference>
<dbReference type="RefSeq" id="WP_012711513.1">
    <property type="nucleotide sequence ID" value="NC_012623.1"/>
</dbReference>
<dbReference type="SMR" id="C3NGZ8"/>
<dbReference type="GeneID" id="84053119"/>
<dbReference type="KEGG" id="sin:YN1551_1313"/>
<dbReference type="HOGENOM" id="CLU_128576_0_0_2"/>
<dbReference type="Proteomes" id="UP000006818">
    <property type="component" value="Chromosome"/>
</dbReference>
<dbReference type="GO" id="GO:0009347">
    <property type="term" value="C:aspartate carbamoyltransferase complex"/>
    <property type="evidence" value="ECO:0007669"/>
    <property type="project" value="InterPro"/>
</dbReference>
<dbReference type="GO" id="GO:0046872">
    <property type="term" value="F:metal ion binding"/>
    <property type="evidence" value="ECO:0007669"/>
    <property type="project" value="UniProtKB-KW"/>
</dbReference>
<dbReference type="GO" id="GO:0006207">
    <property type="term" value="P:'de novo' pyrimidine nucleobase biosynthetic process"/>
    <property type="evidence" value="ECO:0007669"/>
    <property type="project" value="InterPro"/>
</dbReference>
<dbReference type="GO" id="GO:0006221">
    <property type="term" value="P:pyrimidine nucleotide biosynthetic process"/>
    <property type="evidence" value="ECO:0007669"/>
    <property type="project" value="UniProtKB-UniRule"/>
</dbReference>
<dbReference type="Gene3D" id="2.30.30.20">
    <property type="entry name" value="Aspartate carbamoyltransferase regulatory subunit, C-terminal domain"/>
    <property type="match status" value="1"/>
</dbReference>
<dbReference type="Gene3D" id="3.30.70.140">
    <property type="entry name" value="Aspartate carbamoyltransferase regulatory subunit, N-terminal domain"/>
    <property type="match status" value="1"/>
</dbReference>
<dbReference type="HAMAP" id="MF_00002">
    <property type="entry name" value="Asp_carb_tr_reg"/>
    <property type="match status" value="1"/>
</dbReference>
<dbReference type="InterPro" id="IPR020545">
    <property type="entry name" value="Asp_carbamoyltransf_reg_N"/>
</dbReference>
<dbReference type="InterPro" id="IPR002801">
    <property type="entry name" value="Asp_carbamoylTrfase_reg"/>
</dbReference>
<dbReference type="InterPro" id="IPR020542">
    <property type="entry name" value="Asp_carbamoyltrfase_reg_C"/>
</dbReference>
<dbReference type="InterPro" id="IPR036792">
    <property type="entry name" value="Asp_carbatrfase_reg_C_sf"/>
</dbReference>
<dbReference type="InterPro" id="IPR036793">
    <property type="entry name" value="Asp_carbatrfase_reg_N_sf"/>
</dbReference>
<dbReference type="NCBIfam" id="TIGR00240">
    <property type="entry name" value="ATCase_reg"/>
    <property type="match status" value="1"/>
</dbReference>
<dbReference type="PANTHER" id="PTHR35805">
    <property type="entry name" value="ASPARTATE CARBAMOYLTRANSFERASE REGULATORY CHAIN"/>
    <property type="match status" value="1"/>
</dbReference>
<dbReference type="PANTHER" id="PTHR35805:SF1">
    <property type="entry name" value="ASPARTATE CARBAMOYLTRANSFERASE REGULATORY CHAIN"/>
    <property type="match status" value="1"/>
</dbReference>
<dbReference type="Pfam" id="PF01948">
    <property type="entry name" value="PyrI"/>
    <property type="match status" value="1"/>
</dbReference>
<dbReference type="Pfam" id="PF02748">
    <property type="entry name" value="PyrI_C"/>
    <property type="match status" value="1"/>
</dbReference>
<dbReference type="SUPFAM" id="SSF57825">
    <property type="entry name" value="Aspartate carbamoyltransferase, Regulatory-chain, C-terminal domain"/>
    <property type="match status" value="1"/>
</dbReference>
<dbReference type="SUPFAM" id="SSF54893">
    <property type="entry name" value="Aspartate carbamoyltransferase, Regulatory-chain, N-terminal domain"/>
    <property type="match status" value="1"/>
</dbReference>
<name>PYRI_SACI1</name>
<organism>
    <name type="scientific">Saccharolobus islandicus (strain Y.N.15.51 / Yellowstone #2)</name>
    <name type="common">Sulfolobus islandicus</name>
    <dbReference type="NCBI Taxonomy" id="419942"/>
    <lineage>
        <taxon>Archaea</taxon>
        <taxon>Thermoproteota</taxon>
        <taxon>Thermoprotei</taxon>
        <taxon>Sulfolobales</taxon>
        <taxon>Sulfolobaceae</taxon>
        <taxon>Saccharolobus</taxon>
    </lineage>
</organism>
<reference key="1">
    <citation type="journal article" date="2009" name="Proc. Natl. Acad. Sci. U.S.A.">
        <title>Biogeography of the Sulfolobus islandicus pan-genome.</title>
        <authorList>
            <person name="Reno M.L."/>
            <person name="Held N.L."/>
            <person name="Fields C.J."/>
            <person name="Burke P.V."/>
            <person name="Whitaker R.J."/>
        </authorList>
    </citation>
    <scope>NUCLEOTIDE SEQUENCE [LARGE SCALE GENOMIC DNA]</scope>
    <source>
        <strain>Y.N.15.51 / Yellowstone #2</strain>
    </source>
</reference>
<feature type="chain" id="PRO_1000201618" description="Aspartate carbamoyltransferase regulatory chain">
    <location>
        <begin position="1"/>
        <end position="159"/>
    </location>
</feature>
<feature type="binding site" evidence="1">
    <location>
        <position position="113"/>
    </location>
    <ligand>
        <name>Zn(2+)</name>
        <dbReference type="ChEBI" id="CHEBI:29105"/>
    </ligand>
</feature>
<feature type="binding site" evidence="1">
    <location>
        <position position="118"/>
    </location>
    <ligand>
        <name>Zn(2+)</name>
        <dbReference type="ChEBI" id="CHEBI:29105"/>
    </ligand>
</feature>
<feature type="binding site" evidence="1">
    <location>
        <position position="142"/>
    </location>
    <ligand>
        <name>Zn(2+)</name>
        <dbReference type="ChEBI" id="CHEBI:29105"/>
    </ligand>
</feature>
<feature type="binding site" evidence="1">
    <location>
        <position position="145"/>
    </location>
    <ligand>
        <name>Zn(2+)</name>
        <dbReference type="ChEBI" id="CHEBI:29105"/>
    </ligand>
</feature>
<proteinExistence type="inferred from homology"/>
<protein>
    <recommendedName>
        <fullName evidence="1">Aspartate carbamoyltransferase regulatory chain</fullName>
    </recommendedName>
</protein>
<accession>C3NGZ8</accession>
<evidence type="ECO:0000255" key="1">
    <source>
        <dbReference type="HAMAP-Rule" id="MF_00002"/>
    </source>
</evidence>
<sequence length="159" mass="17981">MISSSKRDELIVSKIRKGTVIDHIPAGRALAVLRILGIRGSEGYRVALVMNVESKKIGRKDIVKIEDRVIDEKEASLITLIAPSATINIIRDYVVTEKRHLEVPKQIRGLIKCPNPQCITNNDVEAESRFTTISIKPLKLKCEYCEIYITEEDVIRQIL</sequence>
<comment type="function">
    <text evidence="1">Involved in allosteric regulation of aspartate carbamoyltransferase.</text>
</comment>
<comment type="cofactor">
    <cofactor evidence="1">
        <name>Zn(2+)</name>
        <dbReference type="ChEBI" id="CHEBI:29105"/>
    </cofactor>
    <text evidence="1">Binds 1 zinc ion per subunit.</text>
</comment>
<comment type="subunit">
    <text evidence="1">Contains catalytic and regulatory chains.</text>
</comment>
<comment type="similarity">
    <text evidence="1">Belongs to the PyrI family.</text>
</comment>